<evidence type="ECO:0000255" key="1">
    <source>
        <dbReference type="HAMAP-Rule" id="MF_00083"/>
    </source>
</evidence>
<evidence type="ECO:0000256" key="2">
    <source>
        <dbReference type="SAM" id="MobiDB-lite"/>
    </source>
</evidence>
<accession>Q2JNF7</accession>
<protein>
    <recommendedName>
        <fullName evidence="1">Peptidyl-tRNA hydrolase</fullName>
        <shortName evidence="1">Pth</shortName>
        <ecNumber evidence="1">3.1.1.29</ecNumber>
    </recommendedName>
</protein>
<comment type="function">
    <text evidence="1">Hydrolyzes ribosome-free peptidyl-tRNAs (with 1 or more amino acids incorporated), which drop off the ribosome during protein synthesis, or as a result of ribosome stalling.</text>
</comment>
<comment type="function">
    <text evidence="1">Catalyzes the release of premature peptidyl moieties from peptidyl-tRNA molecules trapped in stalled 50S ribosomal subunits, and thus maintains levels of free tRNAs and 50S ribosomes.</text>
</comment>
<comment type="catalytic activity">
    <reaction evidence="1">
        <text>an N-acyl-L-alpha-aminoacyl-tRNA + H2O = an N-acyl-L-amino acid + a tRNA + H(+)</text>
        <dbReference type="Rhea" id="RHEA:54448"/>
        <dbReference type="Rhea" id="RHEA-COMP:10123"/>
        <dbReference type="Rhea" id="RHEA-COMP:13883"/>
        <dbReference type="ChEBI" id="CHEBI:15377"/>
        <dbReference type="ChEBI" id="CHEBI:15378"/>
        <dbReference type="ChEBI" id="CHEBI:59874"/>
        <dbReference type="ChEBI" id="CHEBI:78442"/>
        <dbReference type="ChEBI" id="CHEBI:138191"/>
        <dbReference type="EC" id="3.1.1.29"/>
    </reaction>
</comment>
<comment type="subunit">
    <text evidence="1">Monomer.</text>
</comment>
<comment type="subcellular location">
    <subcellularLocation>
        <location evidence="1">Cytoplasm</location>
    </subcellularLocation>
</comment>
<comment type="similarity">
    <text evidence="1">Belongs to the PTH family.</text>
</comment>
<keyword id="KW-0963">Cytoplasm</keyword>
<keyword id="KW-0378">Hydrolase</keyword>
<keyword id="KW-1185">Reference proteome</keyword>
<keyword id="KW-0694">RNA-binding</keyword>
<keyword id="KW-0820">tRNA-binding</keyword>
<gene>
    <name evidence="1" type="primary">pth</name>
    <name type="ordered locus">CYB_0725</name>
</gene>
<reference key="1">
    <citation type="journal article" date="2007" name="ISME J.">
        <title>Population level functional diversity in a microbial community revealed by comparative genomic and metagenomic analyses.</title>
        <authorList>
            <person name="Bhaya D."/>
            <person name="Grossman A.R."/>
            <person name="Steunou A.-S."/>
            <person name="Khuri N."/>
            <person name="Cohan F.M."/>
            <person name="Hamamura N."/>
            <person name="Melendrez M.C."/>
            <person name="Bateson M.M."/>
            <person name="Ward D.M."/>
            <person name="Heidelberg J.F."/>
        </authorList>
    </citation>
    <scope>NUCLEOTIDE SEQUENCE [LARGE SCALE GENOMIC DNA]</scope>
    <source>
        <strain>JA-2-3B'a(2-13)</strain>
    </source>
</reference>
<dbReference type="EC" id="3.1.1.29" evidence="1"/>
<dbReference type="EMBL" id="CP000240">
    <property type="protein sequence ID" value="ABD01709.1"/>
    <property type="molecule type" value="Genomic_DNA"/>
</dbReference>
<dbReference type="RefSeq" id="WP_011432367.1">
    <property type="nucleotide sequence ID" value="NC_007776.1"/>
</dbReference>
<dbReference type="SMR" id="Q2JNF7"/>
<dbReference type="STRING" id="321332.CYB_0725"/>
<dbReference type="KEGG" id="cyb:CYB_0725"/>
<dbReference type="eggNOG" id="COG0193">
    <property type="taxonomic scope" value="Bacteria"/>
</dbReference>
<dbReference type="HOGENOM" id="CLU_062456_4_1_3"/>
<dbReference type="OrthoDB" id="9800507at2"/>
<dbReference type="Proteomes" id="UP000001938">
    <property type="component" value="Chromosome"/>
</dbReference>
<dbReference type="GO" id="GO:0005737">
    <property type="term" value="C:cytoplasm"/>
    <property type="evidence" value="ECO:0007669"/>
    <property type="project" value="UniProtKB-SubCell"/>
</dbReference>
<dbReference type="GO" id="GO:0004045">
    <property type="term" value="F:peptidyl-tRNA hydrolase activity"/>
    <property type="evidence" value="ECO:0007669"/>
    <property type="project" value="UniProtKB-UniRule"/>
</dbReference>
<dbReference type="GO" id="GO:0000049">
    <property type="term" value="F:tRNA binding"/>
    <property type="evidence" value="ECO:0007669"/>
    <property type="project" value="UniProtKB-UniRule"/>
</dbReference>
<dbReference type="GO" id="GO:0006515">
    <property type="term" value="P:protein quality control for misfolded or incompletely synthesized proteins"/>
    <property type="evidence" value="ECO:0007669"/>
    <property type="project" value="UniProtKB-UniRule"/>
</dbReference>
<dbReference type="GO" id="GO:0072344">
    <property type="term" value="P:rescue of stalled ribosome"/>
    <property type="evidence" value="ECO:0007669"/>
    <property type="project" value="UniProtKB-UniRule"/>
</dbReference>
<dbReference type="CDD" id="cd00462">
    <property type="entry name" value="PTH"/>
    <property type="match status" value="1"/>
</dbReference>
<dbReference type="FunFam" id="3.40.50.1470:FF:000001">
    <property type="entry name" value="Peptidyl-tRNA hydrolase"/>
    <property type="match status" value="1"/>
</dbReference>
<dbReference type="Gene3D" id="3.40.50.1470">
    <property type="entry name" value="Peptidyl-tRNA hydrolase"/>
    <property type="match status" value="1"/>
</dbReference>
<dbReference type="HAMAP" id="MF_00083">
    <property type="entry name" value="Pept_tRNA_hydro_bact"/>
    <property type="match status" value="1"/>
</dbReference>
<dbReference type="InterPro" id="IPR001328">
    <property type="entry name" value="Pept_tRNA_hydro"/>
</dbReference>
<dbReference type="InterPro" id="IPR018171">
    <property type="entry name" value="Pept_tRNA_hydro_CS"/>
</dbReference>
<dbReference type="InterPro" id="IPR036416">
    <property type="entry name" value="Pept_tRNA_hydro_sf"/>
</dbReference>
<dbReference type="NCBIfam" id="TIGR00447">
    <property type="entry name" value="pth"/>
    <property type="match status" value="1"/>
</dbReference>
<dbReference type="PANTHER" id="PTHR17224">
    <property type="entry name" value="PEPTIDYL-TRNA HYDROLASE"/>
    <property type="match status" value="1"/>
</dbReference>
<dbReference type="PANTHER" id="PTHR17224:SF1">
    <property type="entry name" value="PEPTIDYL-TRNA HYDROLASE"/>
    <property type="match status" value="1"/>
</dbReference>
<dbReference type="Pfam" id="PF01195">
    <property type="entry name" value="Pept_tRNA_hydro"/>
    <property type="match status" value="1"/>
</dbReference>
<dbReference type="SUPFAM" id="SSF53178">
    <property type="entry name" value="Peptidyl-tRNA hydrolase-like"/>
    <property type="match status" value="1"/>
</dbReference>
<dbReference type="PROSITE" id="PS01195">
    <property type="entry name" value="PEPT_TRNA_HYDROL_1"/>
    <property type="match status" value="1"/>
</dbReference>
<dbReference type="PROSITE" id="PS01196">
    <property type="entry name" value="PEPT_TRNA_HYDROL_2"/>
    <property type="match status" value="1"/>
</dbReference>
<proteinExistence type="inferred from homology"/>
<organism>
    <name type="scientific">Synechococcus sp. (strain JA-2-3B'a(2-13))</name>
    <name type="common">Cyanobacteria bacterium Yellowstone B-Prime</name>
    <dbReference type="NCBI Taxonomy" id="321332"/>
    <lineage>
        <taxon>Bacteria</taxon>
        <taxon>Bacillati</taxon>
        <taxon>Cyanobacteriota</taxon>
        <taxon>Cyanophyceae</taxon>
        <taxon>Synechococcales</taxon>
        <taxon>Synechococcaceae</taxon>
        <taxon>Synechococcus</taxon>
    </lineage>
</organism>
<name>PTH_SYNJB</name>
<feature type="chain" id="PRO_0000264126" description="Peptidyl-tRNA hydrolase">
    <location>
        <begin position="1"/>
        <end position="224"/>
    </location>
</feature>
<feature type="region of interest" description="Disordered" evidence="2">
    <location>
        <begin position="203"/>
        <end position="224"/>
    </location>
</feature>
<feature type="compositionally biased region" description="Low complexity" evidence="2">
    <location>
        <begin position="203"/>
        <end position="215"/>
    </location>
</feature>
<feature type="active site" description="Proton acceptor" evidence="1">
    <location>
        <position position="32"/>
    </location>
</feature>
<feature type="binding site" evidence="1">
    <location>
        <position position="27"/>
    </location>
    <ligand>
        <name>tRNA</name>
        <dbReference type="ChEBI" id="CHEBI:17843"/>
    </ligand>
</feature>
<feature type="binding site" evidence="1">
    <location>
        <position position="78"/>
    </location>
    <ligand>
        <name>tRNA</name>
        <dbReference type="ChEBI" id="CHEBI:17843"/>
    </ligand>
</feature>
<feature type="binding site" evidence="1">
    <location>
        <position position="80"/>
    </location>
    <ligand>
        <name>tRNA</name>
        <dbReference type="ChEBI" id="CHEBI:17843"/>
    </ligand>
</feature>
<feature type="binding site" evidence="1">
    <location>
        <position position="126"/>
    </location>
    <ligand>
        <name>tRNA</name>
        <dbReference type="ChEBI" id="CHEBI:17843"/>
    </ligand>
</feature>
<feature type="site" description="Discriminates between blocked and unblocked aminoacyl-tRNA" evidence="1">
    <location>
        <position position="22"/>
    </location>
</feature>
<feature type="site" description="Stabilizes the basic form of H active site to accept a proton" evidence="1">
    <location>
        <position position="105"/>
    </location>
</feature>
<sequence>MTQVKPKEVDEISLQLVVGLGNPGPQYANTRHNCGFMVVDRLAQRWGIPLVLEKRFQGSYGEGFALGGKRRLLKPETYMNRSGQSVRAVLDWYKLDLASVLVVYDDMDLPLGRLRLRGSGSAGGHNGMKSIIQHLGSEAFPRLRLGVGKPKGSQDVVGHVLGGFAPAEQEVLERVLDVAVEAVECCWQEGLRTAMNRFNPLDLSGPSSDLDGSNPAPGHGEASS</sequence>